<sequence length="249" mass="27890">MRVKIVSKPTSQLNYTVEKIKNISNKLGFEVVDIDFDYVIAVGGDGTLLRAVKLGKPVIAIKAGRRGLLMDVPVDKIEDALLRLKKGDYNEEEYMLLEMVHNDKVELGFNEIGILYDRPEAIKVGISFDTERVSVEGDGVLVSTPQGSSGWGMSATNSLLYKDLNAIEIIFVNPIFYYLRSVVIPPKSLILRLEDKGYPQTARVVVDGEVVTLIKTNQEITVRVSQHKAKILRFFKLDLIGEVLHAYHI</sequence>
<protein>
    <recommendedName>
        <fullName evidence="1">NAD kinase</fullName>
        <ecNumber evidence="1">2.7.1.23</ecNumber>
    </recommendedName>
    <alternativeName>
        <fullName evidence="1">ATP-dependent NAD kinase</fullName>
    </alternativeName>
</protein>
<name>NADK_SACS2</name>
<dbReference type="EC" id="2.7.1.23" evidence="1"/>
<dbReference type="EMBL" id="AE006641">
    <property type="protein sequence ID" value="AAK42388.1"/>
    <property type="molecule type" value="Genomic_DNA"/>
</dbReference>
<dbReference type="PIR" id="E90391">
    <property type="entry name" value="E90391"/>
</dbReference>
<dbReference type="RefSeq" id="WP_009992063.1">
    <property type="nucleotide sequence ID" value="NC_002754.1"/>
</dbReference>
<dbReference type="SMR" id="Q97WJ8"/>
<dbReference type="FunCoup" id="Q97WJ8">
    <property type="interactions" value="176"/>
</dbReference>
<dbReference type="STRING" id="273057.SSO2219"/>
<dbReference type="PaxDb" id="273057-SSO2219"/>
<dbReference type="EnsemblBacteria" id="AAK42388">
    <property type="protein sequence ID" value="AAK42388"/>
    <property type="gene ID" value="SSO2219"/>
</dbReference>
<dbReference type="KEGG" id="sso:SSO2219"/>
<dbReference type="PATRIC" id="fig|273057.12.peg.2314"/>
<dbReference type="eggNOG" id="arCOG01348">
    <property type="taxonomic scope" value="Archaea"/>
</dbReference>
<dbReference type="HOGENOM" id="CLU_008831_0_3_2"/>
<dbReference type="InParanoid" id="Q97WJ8"/>
<dbReference type="PhylomeDB" id="Q97WJ8"/>
<dbReference type="Proteomes" id="UP000001974">
    <property type="component" value="Chromosome"/>
</dbReference>
<dbReference type="GO" id="GO:0005737">
    <property type="term" value="C:cytoplasm"/>
    <property type="evidence" value="ECO:0007669"/>
    <property type="project" value="UniProtKB-SubCell"/>
</dbReference>
<dbReference type="GO" id="GO:0005524">
    <property type="term" value="F:ATP binding"/>
    <property type="evidence" value="ECO:0007669"/>
    <property type="project" value="UniProtKB-KW"/>
</dbReference>
<dbReference type="GO" id="GO:0046872">
    <property type="term" value="F:metal ion binding"/>
    <property type="evidence" value="ECO:0007669"/>
    <property type="project" value="UniProtKB-UniRule"/>
</dbReference>
<dbReference type="GO" id="GO:0003951">
    <property type="term" value="F:NAD+ kinase activity"/>
    <property type="evidence" value="ECO:0000318"/>
    <property type="project" value="GO_Central"/>
</dbReference>
<dbReference type="GO" id="GO:0019674">
    <property type="term" value="P:NAD metabolic process"/>
    <property type="evidence" value="ECO:0007669"/>
    <property type="project" value="InterPro"/>
</dbReference>
<dbReference type="GO" id="GO:0006741">
    <property type="term" value="P:NADP biosynthetic process"/>
    <property type="evidence" value="ECO:0000318"/>
    <property type="project" value="GO_Central"/>
</dbReference>
<dbReference type="Gene3D" id="3.40.50.10330">
    <property type="entry name" value="Probable inorganic polyphosphate/atp-NAD kinase, domain 1"/>
    <property type="match status" value="1"/>
</dbReference>
<dbReference type="Gene3D" id="2.60.200.30">
    <property type="entry name" value="Probable inorganic polyphosphate/atp-NAD kinase, domain 2"/>
    <property type="match status" value="1"/>
</dbReference>
<dbReference type="HAMAP" id="MF_00361">
    <property type="entry name" value="NAD_kinase"/>
    <property type="match status" value="1"/>
</dbReference>
<dbReference type="InterPro" id="IPR017438">
    <property type="entry name" value="ATP-NAD_kinase_N"/>
</dbReference>
<dbReference type="InterPro" id="IPR017437">
    <property type="entry name" value="ATP-NAD_kinase_PpnK-typ_C"/>
</dbReference>
<dbReference type="InterPro" id="IPR016064">
    <property type="entry name" value="NAD/diacylglycerol_kinase_sf"/>
</dbReference>
<dbReference type="InterPro" id="IPR002504">
    <property type="entry name" value="NADK"/>
</dbReference>
<dbReference type="PANTHER" id="PTHR20275:SF43">
    <property type="entry name" value="BIFUNCTIONAL NADP PHOSPHATASE_NAD KINASE"/>
    <property type="match status" value="1"/>
</dbReference>
<dbReference type="PANTHER" id="PTHR20275">
    <property type="entry name" value="NAD KINASE"/>
    <property type="match status" value="1"/>
</dbReference>
<dbReference type="Pfam" id="PF01513">
    <property type="entry name" value="NAD_kinase"/>
    <property type="match status" value="1"/>
</dbReference>
<dbReference type="Pfam" id="PF20143">
    <property type="entry name" value="NAD_kinase_C"/>
    <property type="match status" value="1"/>
</dbReference>
<dbReference type="SUPFAM" id="SSF111331">
    <property type="entry name" value="NAD kinase/diacylglycerol kinase-like"/>
    <property type="match status" value="1"/>
</dbReference>
<evidence type="ECO:0000255" key="1">
    <source>
        <dbReference type="HAMAP-Rule" id="MF_00361"/>
    </source>
</evidence>
<accession>Q97WJ8</accession>
<gene>
    <name evidence="1" type="primary">nadK</name>
    <name type="ordered locus">SSO2219</name>
</gene>
<comment type="function">
    <text evidence="1">Involved in the regulation of the intracellular balance of NAD and NADP, and is a key enzyme in the biosynthesis of NADP. Catalyzes specifically the phosphorylation on 2'-hydroxyl of the adenosine moiety of NAD to yield NADP.</text>
</comment>
<comment type="catalytic activity">
    <reaction evidence="1">
        <text>NAD(+) + ATP = ADP + NADP(+) + H(+)</text>
        <dbReference type="Rhea" id="RHEA:18629"/>
        <dbReference type="ChEBI" id="CHEBI:15378"/>
        <dbReference type="ChEBI" id="CHEBI:30616"/>
        <dbReference type="ChEBI" id="CHEBI:57540"/>
        <dbReference type="ChEBI" id="CHEBI:58349"/>
        <dbReference type="ChEBI" id="CHEBI:456216"/>
        <dbReference type="EC" id="2.7.1.23"/>
    </reaction>
</comment>
<comment type="cofactor">
    <cofactor evidence="1">
        <name>a divalent metal cation</name>
        <dbReference type="ChEBI" id="CHEBI:60240"/>
    </cofactor>
</comment>
<comment type="subcellular location">
    <subcellularLocation>
        <location evidence="1">Cytoplasm</location>
    </subcellularLocation>
</comment>
<comment type="similarity">
    <text evidence="1">Belongs to the NAD kinase family.</text>
</comment>
<feature type="chain" id="PRO_0000120709" description="NAD kinase">
    <location>
        <begin position="1"/>
        <end position="249"/>
    </location>
</feature>
<feature type="active site" description="Proton acceptor" evidence="1">
    <location>
        <position position="45"/>
    </location>
</feature>
<feature type="binding site" evidence="1">
    <location>
        <begin position="45"/>
        <end position="46"/>
    </location>
    <ligand>
        <name>NAD(+)</name>
        <dbReference type="ChEBI" id="CHEBI:57540"/>
    </ligand>
</feature>
<feature type="binding site" evidence="1">
    <location>
        <position position="50"/>
    </location>
    <ligand>
        <name>NAD(+)</name>
        <dbReference type="ChEBI" id="CHEBI:57540"/>
    </ligand>
</feature>
<feature type="binding site" evidence="1">
    <location>
        <begin position="110"/>
        <end position="111"/>
    </location>
    <ligand>
        <name>NAD(+)</name>
        <dbReference type="ChEBI" id="CHEBI:57540"/>
    </ligand>
</feature>
<feature type="binding site" evidence="1">
    <location>
        <position position="138"/>
    </location>
    <ligand>
        <name>NAD(+)</name>
        <dbReference type="ChEBI" id="CHEBI:57540"/>
    </ligand>
</feature>
<feature type="binding site" evidence="1">
    <location>
        <begin position="149"/>
        <end position="154"/>
    </location>
    <ligand>
        <name>NAD(+)</name>
        <dbReference type="ChEBI" id="CHEBI:57540"/>
    </ligand>
</feature>
<proteinExistence type="inferred from homology"/>
<keyword id="KW-0067">ATP-binding</keyword>
<keyword id="KW-0963">Cytoplasm</keyword>
<keyword id="KW-0418">Kinase</keyword>
<keyword id="KW-0520">NAD</keyword>
<keyword id="KW-0521">NADP</keyword>
<keyword id="KW-0547">Nucleotide-binding</keyword>
<keyword id="KW-1185">Reference proteome</keyword>
<keyword id="KW-0808">Transferase</keyword>
<organism>
    <name type="scientific">Saccharolobus solfataricus (strain ATCC 35092 / DSM 1617 / JCM 11322 / P2)</name>
    <name type="common">Sulfolobus solfataricus</name>
    <dbReference type="NCBI Taxonomy" id="273057"/>
    <lineage>
        <taxon>Archaea</taxon>
        <taxon>Thermoproteota</taxon>
        <taxon>Thermoprotei</taxon>
        <taxon>Sulfolobales</taxon>
        <taxon>Sulfolobaceae</taxon>
        <taxon>Saccharolobus</taxon>
    </lineage>
</organism>
<reference key="1">
    <citation type="journal article" date="2001" name="Proc. Natl. Acad. Sci. U.S.A.">
        <title>The complete genome of the crenarchaeon Sulfolobus solfataricus P2.</title>
        <authorList>
            <person name="She Q."/>
            <person name="Singh R.K."/>
            <person name="Confalonieri F."/>
            <person name="Zivanovic Y."/>
            <person name="Allard G."/>
            <person name="Awayez M.J."/>
            <person name="Chan-Weiher C.C.-Y."/>
            <person name="Clausen I.G."/>
            <person name="Curtis B.A."/>
            <person name="De Moors A."/>
            <person name="Erauso G."/>
            <person name="Fletcher C."/>
            <person name="Gordon P.M.K."/>
            <person name="Heikamp-de Jong I."/>
            <person name="Jeffries A.C."/>
            <person name="Kozera C.J."/>
            <person name="Medina N."/>
            <person name="Peng X."/>
            <person name="Thi-Ngoc H.P."/>
            <person name="Redder P."/>
            <person name="Schenk M.E."/>
            <person name="Theriault C."/>
            <person name="Tolstrup N."/>
            <person name="Charlebois R.L."/>
            <person name="Doolittle W.F."/>
            <person name="Duguet M."/>
            <person name="Gaasterland T."/>
            <person name="Garrett R.A."/>
            <person name="Ragan M.A."/>
            <person name="Sensen C.W."/>
            <person name="Van der Oost J."/>
        </authorList>
    </citation>
    <scope>NUCLEOTIDE SEQUENCE [LARGE SCALE GENOMIC DNA]</scope>
    <source>
        <strain>ATCC 35092 / DSM 1617 / JCM 11322 / P2</strain>
    </source>
</reference>